<proteinExistence type="inferred from homology"/>
<protein>
    <recommendedName>
        <fullName>Alpha-galactosidase 2</fullName>
        <ecNumber>3.2.1.22</ecNumber>
    </recommendedName>
    <alternativeName>
        <fullName>Melibiase</fullName>
    </alternativeName>
</protein>
<reference key="1">
    <citation type="submission" date="1994-04" db="EMBL/GenBank/DDBJ databases">
        <title>The sucrose and raffinose operons of Pediococcus pentosaceus PPE1.0.</title>
        <authorList>
            <person name="Leenhouts K.J."/>
            <person name="Bolhuis A.A."/>
            <person name="Kok J.J."/>
            <person name="Venema G.G."/>
        </authorList>
    </citation>
    <scope>NUCLEOTIDE SEQUENCE [GENOMIC DNA]</scope>
    <source>
        <strain>PPE1.0</strain>
    </source>
</reference>
<accession>P43469</accession>
<name>AGAL2_PEDPE</name>
<feature type="chain" id="PRO_0000134875" description="Alpha-galactosidase 2">
    <location>
        <begin position="1"/>
        <end position="719"/>
    </location>
</feature>
<feature type="active site" description="Nucleophile" evidence="1">
    <location>
        <position position="472"/>
    </location>
</feature>
<feature type="active site" description="Proton donor" evidence="1">
    <location>
        <position position="542"/>
    </location>
</feature>
<evidence type="ECO:0000250" key="1">
    <source>
        <dbReference type="UniProtKB" id="Q9ALJ4"/>
    </source>
</evidence>
<evidence type="ECO:0000305" key="2"/>
<keyword id="KW-0326">Glycosidase</keyword>
<keyword id="KW-0378">Hydrolase</keyword>
<comment type="function">
    <text>Alpha-galactosidase associated with the sucrase operon.</text>
</comment>
<comment type="catalytic activity">
    <reaction>
        <text>Hydrolysis of terminal, non-reducing alpha-D-galactose residues in alpha-D-galactosides, including galactose oligosaccharides, galactomannans and galactolipids.</text>
        <dbReference type="EC" id="3.2.1.22"/>
    </reaction>
</comment>
<comment type="similarity">
    <text evidence="2">Belongs to the glycosyl hydrolase 36 family.</text>
</comment>
<sequence length="719" mass="81368">MPVEYDPKTGLINLHNDQISYVIQILAHRYPVHRYFGRYFSKQPYFEPMPSGSHAFANDPTERFPYSVTSLPLEYSTIGSGDYRQPAYVIKDANNQLLPILEYTGFSVNDQPINSRQLPPTVSKHTPVTTLVIHLTDAVTKLQMDLNYTIFENQPLILRSTTLRHHGTTNLQVTALSSAQLDLPTDQYTALTLSGTHAHEANPSFNRLHPGLQTVRSLRGTSGPQHQPFMALAEPNTTELAGTVIGCALAWSGNFDSTVEVDQYQHSRLTIGLEPDTFEWQLKPNSSFQTPEAVLTWTNTGFNGMSQVFHDFSYQLMPSQTNIPSVLNTWETLTFAVSESKVQHLIEHAHQLGLQMLVLDDGWFVNRNGENGQLGDWFVDPIKFPNGLNPLAQQAHHHRMKFGLWVEPEMITTNSQLYQQHPDWVLQYVDRTPITARHQLVLDLSQAAVRDHLITTLTNLVQNNQLDYLKWDMNRHLTQVGSTHLPAAQQGELYHRYVCGLYDILTRLKRACPKLIIENCSAGGGRFDFGMLPYTNQTWISDLTDPVDRATIENGFSYLFPPRIFSNHITASPNAQNGRITPFETRLQLACIGQLGLELNPKQLAPSEQQLLRGALIKYQQLKSTFIKAHFYRLPTTRHVVAWLIVTADKKQAICCYLNGLNSRVKTQHPLPLHYLDAELAYSDSSGNRYTGHQLNTMGIPLKPTNADFTSQLIYLCQN</sequence>
<organism>
    <name type="scientific">Pediococcus pentosaceus</name>
    <dbReference type="NCBI Taxonomy" id="1255"/>
    <lineage>
        <taxon>Bacteria</taxon>
        <taxon>Bacillati</taxon>
        <taxon>Bacillota</taxon>
        <taxon>Bacilli</taxon>
        <taxon>Lactobacillales</taxon>
        <taxon>Lactobacillaceae</taxon>
        <taxon>Pediococcus</taxon>
    </lineage>
</organism>
<gene>
    <name type="primary">agaS</name>
</gene>
<dbReference type="EC" id="3.2.1.22"/>
<dbReference type="EMBL" id="L32093">
    <property type="protein sequence ID" value="AAA25566.1"/>
    <property type="molecule type" value="Genomic_DNA"/>
</dbReference>
<dbReference type="SMR" id="P43469"/>
<dbReference type="CAZy" id="GH36">
    <property type="family name" value="Glycoside Hydrolase Family 36"/>
</dbReference>
<dbReference type="GO" id="GO:0004557">
    <property type="term" value="F:alpha-galactosidase activity"/>
    <property type="evidence" value="ECO:0007669"/>
    <property type="project" value="UniProtKB-EC"/>
</dbReference>
<dbReference type="GO" id="GO:0016052">
    <property type="term" value="P:carbohydrate catabolic process"/>
    <property type="evidence" value="ECO:0007669"/>
    <property type="project" value="InterPro"/>
</dbReference>
<dbReference type="CDD" id="cd14791">
    <property type="entry name" value="GH36"/>
    <property type="match status" value="1"/>
</dbReference>
<dbReference type="FunFam" id="3.20.20.70:FF:000118">
    <property type="entry name" value="Alpha-galactosidase"/>
    <property type="match status" value="1"/>
</dbReference>
<dbReference type="Gene3D" id="3.20.20.70">
    <property type="entry name" value="Aldolase class I"/>
    <property type="match status" value="1"/>
</dbReference>
<dbReference type="Gene3D" id="2.70.98.60">
    <property type="entry name" value="alpha-galactosidase from lactobacil brevis"/>
    <property type="match status" value="1"/>
</dbReference>
<dbReference type="Gene3D" id="2.60.40.1180">
    <property type="entry name" value="Golgi alpha-mannosidase II"/>
    <property type="match status" value="1"/>
</dbReference>
<dbReference type="InterPro" id="IPR013785">
    <property type="entry name" value="Aldolase_TIM"/>
</dbReference>
<dbReference type="InterPro" id="IPR038417">
    <property type="entry name" value="Alpga-gal_N_sf"/>
</dbReference>
<dbReference type="InterPro" id="IPR050985">
    <property type="entry name" value="Alpha-glycosidase_related"/>
</dbReference>
<dbReference type="InterPro" id="IPR000111">
    <property type="entry name" value="Glyco_hydro_27/36_CS"/>
</dbReference>
<dbReference type="InterPro" id="IPR002252">
    <property type="entry name" value="Glyco_hydro_36"/>
</dbReference>
<dbReference type="InterPro" id="IPR031705">
    <property type="entry name" value="Glyco_hydro_36_C"/>
</dbReference>
<dbReference type="InterPro" id="IPR031704">
    <property type="entry name" value="Glyco_hydro_36_N"/>
</dbReference>
<dbReference type="InterPro" id="IPR013780">
    <property type="entry name" value="Glyco_hydro_b"/>
</dbReference>
<dbReference type="InterPro" id="IPR017853">
    <property type="entry name" value="Glycoside_hydrolase_SF"/>
</dbReference>
<dbReference type="PANTHER" id="PTHR43053:SF3">
    <property type="entry name" value="ALPHA-GALACTOSIDASE C-RELATED"/>
    <property type="match status" value="1"/>
</dbReference>
<dbReference type="PANTHER" id="PTHR43053">
    <property type="entry name" value="GLYCOSIDASE FAMILY 31"/>
    <property type="match status" value="1"/>
</dbReference>
<dbReference type="Pfam" id="PF16874">
    <property type="entry name" value="Glyco_hydro_36C"/>
    <property type="match status" value="1"/>
</dbReference>
<dbReference type="Pfam" id="PF16875">
    <property type="entry name" value="Glyco_hydro_36N"/>
    <property type="match status" value="1"/>
</dbReference>
<dbReference type="Pfam" id="PF02065">
    <property type="entry name" value="Melibiase"/>
    <property type="match status" value="1"/>
</dbReference>
<dbReference type="PIRSF" id="PIRSF005536">
    <property type="entry name" value="Agal"/>
    <property type="match status" value="1"/>
</dbReference>
<dbReference type="PRINTS" id="PR00743">
    <property type="entry name" value="GLHYDRLASE36"/>
</dbReference>
<dbReference type="SUPFAM" id="SSF51445">
    <property type="entry name" value="(Trans)glycosidases"/>
    <property type="match status" value="1"/>
</dbReference>
<dbReference type="PROSITE" id="PS00512">
    <property type="entry name" value="ALPHA_GALACTOSIDASE"/>
    <property type="match status" value="1"/>
</dbReference>